<keyword id="KW-1003">Cell membrane</keyword>
<keyword id="KW-0472">Membrane</keyword>
<keyword id="KW-1185">Reference proteome</keyword>
<keyword id="KW-0812">Transmembrane</keyword>
<keyword id="KW-1133">Transmembrane helix</keyword>
<keyword id="KW-0813">Transport</keyword>
<evidence type="ECO:0000255" key="1"/>
<evidence type="ECO:0000305" key="2"/>
<organism>
    <name type="scientific">Escherichia coli (strain K12)</name>
    <dbReference type="NCBI Taxonomy" id="83333"/>
    <lineage>
        <taxon>Bacteria</taxon>
        <taxon>Pseudomonadati</taxon>
        <taxon>Pseudomonadota</taxon>
        <taxon>Gammaproteobacteria</taxon>
        <taxon>Enterobacterales</taxon>
        <taxon>Enterobacteriaceae</taxon>
        <taxon>Escherichia</taxon>
    </lineage>
</organism>
<accession>P0AFI9</accession>
<accession>P71230</accession>
<accession>P77406</accession>
<gene>
    <name type="primary">perM</name>
    <name type="synonym">yfgO</name>
    <name type="ordered locus">b2493</name>
    <name type="ordered locus">JW2478</name>
</gene>
<reference key="1">
    <citation type="journal article" date="1997" name="DNA Res.">
        <title>Construction of a contiguous 874-kb sequence of the Escherichia coli-K12 genome corresponding to 50.0-68.8 min on the linkage map and analysis of its sequence features.</title>
        <authorList>
            <person name="Yamamoto Y."/>
            <person name="Aiba H."/>
            <person name="Baba T."/>
            <person name="Hayashi K."/>
            <person name="Inada T."/>
            <person name="Isono K."/>
            <person name="Itoh T."/>
            <person name="Kimura S."/>
            <person name="Kitagawa M."/>
            <person name="Makino K."/>
            <person name="Miki T."/>
            <person name="Mitsuhashi N."/>
            <person name="Mizobuchi K."/>
            <person name="Mori H."/>
            <person name="Nakade S."/>
            <person name="Nakamura Y."/>
            <person name="Nashimoto H."/>
            <person name="Oshima T."/>
            <person name="Oyama S."/>
            <person name="Saito N."/>
            <person name="Sampei G."/>
            <person name="Satoh Y."/>
            <person name="Sivasundaram S."/>
            <person name="Tagami H."/>
            <person name="Takahashi H."/>
            <person name="Takeda J."/>
            <person name="Takemoto K."/>
            <person name="Uehara K."/>
            <person name="Wada C."/>
            <person name="Yamagata S."/>
            <person name="Horiuchi T."/>
        </authorList>
    </citation>
    <scope>NUCLEOTIDE SEQUENCE [LARGE SCALE GENOMIC DNA]</scope>
    <source>
        <strain>K12 / W3110 / ATCC 27325 / DSM 5911</strain>
    </source>
</reference>
<reference key="2">
    <citation type="journal article" date="1997" name="Science">
        <title>The complete genome sequence of Escherichia coli K-12.</title>
        <authorList>
            <person name="Blattner F.R."/>
            <person name="Plunkett G. III"/>
            <person name="Bloch C.A."/>
            <person name="Perna N.T."/>
            <person name="Burland V."/>
            <person name="Riley M."/>
            <person name="Collado-Vides J."/>
            <person name="Glasner J.D."/>
            <person name="Rode C.K."/>
            <person name="Mayhew G.F."/>
            <person name="Gregor J."/>
            <person name="Davis N.W."/>
            <person name="Kirkpatrick H.A."/>
            <person name="Goeden M.A."/>
            <person name="Rose D.J."/>
            <person name="Mau B."/>
            <person name="Shao Y."/>
        </authorList>
    </citation>
    <scope>NUCLEOTIDE SEQUENCE [LARGE SCALE GENOMIC DNA]</scope>
    <source>
        <strain>K12 / MG1655 / ATCC 47076</strain>
    </source>
</reference>
<reference key="3">
    <citation type="journal article" date="2006" name="Mol. Syst. Biol.">
        <title>Highly accurate genome sequences of Escherichia coli K-12 strains MG1655 and W3110.</title>
        <authorList>
            <person name="Hayashi K."/>
            <person name="Morooka N."/>
            <person name="Yamamoto Y."/>
            <person name="Fujita K."/>
            <person name="Isono K."/>
            <person name="Choi S."/>
            <person name="Ohtsubo E."/>
            <person name="Baba T."/>
            <person name="Wanner B.L."/>
            <person name="Mori H."/>
            <person name="Horiuchi T."/>
        </authorList>
    </citation>
    <scope>NUCLEOTIDE SEQUENCE [LARGE SCALE GENOMIC DNA]</scope>
    <source>
        <strain>K12 / W3110 / ATCC 27325 / DSM 5911</strain>
    </source>
</reference>
<reference key="4">
    <citation type="journal article" date="1997" name="Microbiology">
        <title>A 12-cistron Escherichia coli operon (hyf) encoding a putative proton-translocating formate hydrogenlyase system.</title>
        <authorList>
            <person name="Andrews S.C."/>
            <person name="Berks B.C."/>
            <person name="McClay J."/>
            <person name="Ambler A."/>
            <person name="Quail M.A."/>
            <person name="Golby P."/>
            <person name="Guest J.R."/>
        </authorList>
    </citation>
    <scope>NUCLEOTIDE SEQUENCE [GENOMIC DNA] OF 285-353</scope>
    <source>
        <strain>K12</strain>
    </source>
</reference>
<sequence length="353" mass="39194">MLEMLMQWYRRRFSDPEAIALLVILVAGFGIIFFFSGLLAPLLVAIVLAYLLEWPTVRLQSIGCSRRWATSIVLVVFVGILLLMAFVVLPIAWQQGIYLIRDMPGMLNKLSDFAATLPRRYPALMDAGIIDAMAENMRSRMLTMGDSVVKISLASLVGLLTIAVYLVLVPLMVFFLLKDKEQMLNAVRRVLPRNRGLAGQVWKEMNQQITNYIRGKVLEMIVVGIATWLGFLLFGLNYSLLLAVLVGFSVLIPYIGAFVVTIPVVGVALFQFGAGTEFWSCFAVYLIIQALDGNLLVPVLFSEAVNLHPLVIILSVVIFGGLWGFWGVFFAIPLATLIKAVIHAWPDGQIAQE</sequence>
<comment type="subcellular location">
    <subcellularLocation>
        <location evidence="2">Cell membrane</location>
        <topology evidence="2">Multi-pass membrane protein</topology>
    </subcellularLocation>
</comment>
<comment type="similarity">
    <text evidence="2">Belongs to the autoinducer-2 exporter (AI-2E) (TC 2.A.86) family.</text>
</comment>
<name>PERM_ECOLI</name>
<dbReference type="EMBL" id="U00096">
    <property type="protein sequence ID" value="AAC75546.1"/>
    <property type="molecule type" value="Genomic_DNA"/>
</dbReference>
<dbReference type="EMBL" id="AP009048">
    <property type="protein sequence ID" value="BAA16382.1"/>
    <property type="molecule type" value="Genomic_DNA"/>
</dbReference>
<dbReference type="EMBL" id="M63654">
    <property type="protein sequence ID" value="AAB88575.1"/>
    <property type="molecule type" value="Genomic_DNA"/>
</dbReference>
<dbReference type="PIR" id="D65025">
    <property type="entry name" value="D65025"/>
</dbReference>
<dbReference type="RefSeq" id="NP_416988.1">
    <property type="nucleotide sequence ID" value="NC_000913.3"/>
</dbReference>
<dbReference type="RefSeq" id="WP_000892044.1">
    <property type="nucleotide sequence ID" value="NZ_STEB01000011.1"/>
</dbReference>
<dbReference type="SMR" id="P0AFI9"/>
<dbReference type="BioGRID" id="4261433">
    <property type="interactions" value="33"/>
</dbReference>
<dbReference type="FunCoup" id="P0AFI9">
    <property type="interactions" value="256"/>
</dbReference>
<dbReference type="IntAct" id="P0AFI9">
    <property type="interactions" value="1"/>
</dbReference>
<dbReference type="STRING" id="511145.b2493"/>
<dbReference type="TCDB" id="2.A.86.1.1">
    <property type="family name" value="the autoinducer-2 exporter (ai-2e) family (formerly the perm family, tc #9,b,22)"/>
</dbReference>
<dbReference type="jPOST" id="P0AFI9"/>
<dbReference type="PaxDb" id="511145-b2493"/>
<dbReference type="DNASU" id="945894"/>
<dbReference type="EnsemblBacteria" id="AAC75546">
    <property type="protein sequence ID" value="AAC75546"/>
    <property type="gene ID" value="b2493"/>
</dbReference>
<dbReference type="GeneID" id="945894"/>
<dbReference type="KEGG" id="ecj:JW2478"/>
<dbReference type="KEGG" id="eco:b2493"/>
<dbReference type="KEGG" id="ecoc:C3026_13830"/>
<dbReference type="PATRIC" id="fig|1411691.4.peg.4246"/>
<dbReference type="EchoBASE" id="EB3973"/>
<dbReference type="eggNOG" id="COG0628">
    <property type="taxonomic scope" value="Bacteria"/>
</dbReference>
<dbReference type="HOGENOM" id="CLU_031275_8_0_6"/>
<dbReference type="InParanoid" id="P0AFI9"/>
<dbReference type="OMA" id="WVLMRVI"/>
<dbReference type="OrthoDB" id="5562213at2"/>
<dbReference type="PhylomeDB" id="P0AFI9"/>
<dbReference type="BioCyc" id="EcoCyc:G7310-MONOMER"/>
<dbReference type="PRO" id="PR:P0AFI9"/>
<dbReference type="Proteomes" id="UP000000625">
    <property type="component" value="Chromosome"/>
</dbReference>
<dbReference type="GO" id="GO:0005886">
    <property type="term" value="C:plasma membrane"/>
    <property type="evidence" value="ECO:0000314"/>
    <property type="project" value="EcoCyc"/>
</dbReference>
<dbReference type="GO" id="GO:0055085">
    <property type="term" value="P:transmembrane transport"/>
    <property type="evidence" value="ECO:0000318"/>
    <property type="project" value="GO_Central"/>
</dbReference>
<dbReference type="InterPro" id="IPR002549">
    <property type="entry name" value="AI-2E-like"/>
</dbReference>
<dbReference type="PANTHER" id="PTHR21716:SF53">
    <property type="entry name" value="PERMEASE PERM-RELATED"/>
    <property type="match status" value="1"/>
</dbReference>
<dbReference type="PANTHER" id="PTHR21716">
    <property type="entry name" value="TRANSMEMBRANE PROTEIN"/>
    <property type="match status" value="1"/>
</dbReference>
<dbReference type="Pfam" id="PF01594">
    <property type="entry name" value="AI-2E_transport"/>
    <property type="match status" value="1"/>
</dbReference>
<feature type="chain" id="PRO_0000148294" description="Putative permease PerM">
    <location>
        <begin position="1"/>
        <end position="353"/>
    </location>
</feature>
<feature type="transmembrane region" description="Helical" evidence="1">
    <location>
        <begin position="19"/>
        <end position="39"/>
    </location>
</feature>
<feature type="transmembrane region" description="Helical" evidence="1">
    <location>
        <begin position="72"/>
        <end position="92"/>
    </location>
</feature>
<feature type="transmembrane region" description="Helical" evidence="1">
    <location>
        <begin position="156"/>
        <end position="176"/>
    </location>
</feature>
<feature type="transmembrane region" description="Helical" evidence="1">
    <location>
        <begin position="217"/>
        <end position="237"/>
    </location>
</feature>
<feature type="transmembrane region" description="Helical" evidence="1">
    <location>
        <begin position="240"/>
        <end position="260"/>
    </location>
</feature>
<feature type="transmembrane region" description="Helical" evidence="1">
    <location>
        <begin position="281"/>
        <end position="301"/>
    </location>
</feature>
<feature type="transmembrane region" description="Helical" evidence="1">
    <location>
        <begin position="310"/>
        <end position="330"/>
    </location>
</feature>
<protein>
    <recommendedName>
        <fullName>Putative permease PerM</fullName>
    </recommendedName>
</protein>
<proteinExistence type="inferred from homology"/>